<protein>
    <recommendedName>
        <fullName evidence="1">Large ribosomal subunit protein uL22</fullName>
    </recommendedName>
    <alternativeName>
        <fullName evidence="2">50S ribosomal protein L22</fullName>
    </alternativeName>
</protein>
<feature type="chain" id="PRO_1000052605" description="Large ribosomal subunit protein uL22">
    <location>
        <begin position="1"/>
        <end position="109"/>
    </location>
</feature>
<reference key="1">
    <citation type="submission" date="2006-03" db="EMBL/GenBank/DDBJ databases">
        <title>Complete sequence of Methylobacillus flagellatus KT.</title>
        <authorList>
            <consortium name="US DOE Joint Genome Institute"/>
            <person name="Copeland A."/>
            <person name="Lucas S."/>
            <person name="Lapidus A."/>
            <person name="Barry K."/>
            <person name="Detter J.C."/>
            <person name="Glavina del Rio T."/>
            <person name="Hammon N."/>
            <person name="Israni S."/>
            <person name="Dalin E."/>
            <person name="Tice H."/>
            <person name="Pitluck S."/>
            <person name="Brettin T."/>
            <person name="Bruce D."/>
            <person name="Han C."/>
            <person name="Tapia R."/>
            <person name="Saunders E."/>
            <person name="Gilna P."/>
            <person name="Schmutz J."/>
            <person name="Larimer F."/>
            <person name="Land M."/>
            <person name="Kyrpides N."/>
            <person name="Anderson I."/>
            <person name="Richardson P."/>
        </authorList>
    </citation>
    <scope>NUCLEOTIDE SEQUENCE [LARGE SCALE GENOMIC DNA]</scope>
    <source>
        <strain>ATCC 51484 / DSM 6875 / VKM B-1610 / KT</strain>
    </source>
</reference>
<name>RL22_METFK</name>
<comment type="function">
    <text evidence="1">This protein binds specifically to 23S rRNA; its binding is stimulated by other ribosomal proteins, e.g. L4, L17, and L20. It is important during the early stages of 50S assembly. It makes multiple contacts with different domains of the 23S rRNA in the assembled 50S subunit and ribosome (By similarity).</text>
</comment>
<comment type="function">
    <text evidence="1">The globular domain of the protein is located near the polypeptide exit tunnel on the outside of the subunit, while an extended beta-hairpin is found that lines the wall of the exit tunnel in the center of the 70S ribosome.</text>
</comment>
<comment type="subunit">
    <text evidence="1">Part of the 50S ribosomal subunit.</text>
</comment>
<comment type="similarity">
    <text evidence="1">Belongs to the universal ribosomal protein uL22 family.</text>
</comment>
<dbReference type="EMBL" id="CP000284">
    <property type="protein sequence ID" value="ABE48555.1"/>
    <property type="molecule type" value="Genomic_DNA"/>
</dbReference>
<dbReference type="RefSeq" id="WP_011478652.1">
    <property type="nucleotide sequence ID" value="NC_007947.1"/>
</dbReference>
<dbReference type="SMR" id="Q1H4N2"/>
<dbReference type="STRING" id="265072.Mfla_0284"/>
<dbReference type="KEGG" id="mfa:Mfla_0284"/>
<dbReference type="eggNOG" id="COG0091">
    <property type="taxonomic scope" value="Bacteria"/>
</dbReference>
<dbReference type="HOGENOM" id="CLU_083987_3_3_4"/>
<dbReference type="OrthoDB" id="9805969at2"/>
<dbReference type="Proteomes" id="UP000002440">
    <property type="component" value="Chromosome"/>
</dbReference>
<dbReference type="GO" id="GO:0022625">
    <property type="term" value="C:cytosolic large ribosomal subunit"/>
    <property type="evidence" value="ECO:0007669"/>
    <property type="project" value="TreeGrafter"/>
</dbReference>
<dbReference type="GO" id="GO:0019843">
    <property type="term" value="F:rRNA binding"/>
    <property type="evidence" value="ECO:0007669"/>
    <property type="project" value="UniProtKB-UniRule"/>
</dbReference>
<dbReference type="GO" id="GO:0003735">
    <property type="term" value="F:structural constituent of ribosome"/>
    <property type="evidence" value="ECO:0007669"/>
    <property type="project" value="InterPro"/>
</dbReference>
<dbReference type="GO" id="GO:0006412">
    <property type="term" value="P:translation"/>
    <property type="evidence" value="ECO:0007669"/>
    <property type="project" value="UniProtKB-UniRule"/>
</dbReference>
<dbReference type="CDD" id="cd00336">
    <property type="entry name" value="Ribosomal_L22"/>
    <property type="match status" value="1"/>
</dbReference>
<dbReference type="FunFam" id="3.90.470.10:FF:000001">
    <property type="entry name" value="50S ribosomal protein L22"/>
    <property type="match status" value="1"/>
</dbReference>
<dbReference type="Gene3D" id="3.90.470.10">
    <property type="entry name" value="Ribosomal protein L22/L17"/>
    <property type="match status" value="1"/>
</dbReference>
<dbReference type="HAMAP" id="MF_01331_B">
    <property type="entry name" value="Ribosomal_uL22_B"/>
    <property type="match status" value="1"/>
</dbReference>
<dbReference type="InterPro" id="IPR001063">
    <property type="entry name" value="Ribosomal_uL22"/>
</dbReference>
<dbReference type="InterPro" id="IPR005727">
    <property type="entry name" value="Ribosomal_uL22_bac/chlpt-type"/>
</dbReference>
<dbReference type="InterPro" id="IPR047867">
    <property type="entry name" value="Ribosomal_uL22_bac/org-type"/>
</dbReference>
<dbReference type="InterPro" id="IPR018260">
    <property type="entry name" value="Ribosomal_uL22_CS"/>
</dbReference>
<dbReference type="InterPro" id="IPR036394">
    <property type="entry name" value="Ribosomal_uL22_sf"/>
</dbReference>
<dbReference type="NCBIfam" id="TIGR01044">
    <property type="entry name" value="rplV_bact"/>
    <property type="match status" value="1"/>
</dbReference>
<dbReference type="PANTHER" id="PTHR13501">
    <property type="entry name" value="CHLOROPLAST 50S RIBOSOMAL PROTEIN L22-RELATED"/>
    <property type="match status" value="1"/>
</dbReference>
<dbReference type="PANTHER" id="PTHR13501:SF8">
    <property type="entry name" value="LARGE RIBOSOMAL SUBUNIT PROTEIN UL22M"/>
    <property type="match status" value="1"/>
</dbReference>
<dbReference type="Pfam" id="PF00237">
    <property type="entry name" value="Ribosomal_L22"/>
    <property type="match status" value="1"/>
</dbReference>
<dbReference type="SUPFAM" id="SSF54843">
    <property type="entry name" value="Ribosomal protein L22"/>
    <property type="match status" value="1"/>
</dbReference>
<dbReference type="PROSITE" id="PS00464">
    <property type="entry name" value="RIBOSOMAL_L22"/>
    <property type="match status" value="1"/>
</dbReference>
<evidence type="ECO:0000255" key="1">
    <source>
        <dbReference type="HAMAP-Rule" id="MF_01331"/>
    </source>
</evidence>
<evidence type="ECO:0000305" key="2"/>
<sequence length="109" mass="11775">MEVSAVLRGVHLSPQKARLVADLVRGKKVDQALNILAFTPKKGAEVIKKVVESAIANAEHNEGADIDELKVTSIYVDKGLVLKRIRARAKGRAGRIIKPTCHITVTVGN</sequence>
<proteinExistence type="inferred from homology"/>
<gene>
    <name evidence="1" type="primary">rplV</name>
    <name type="ordered locus">Mfla_0284</name>
</gene>
<accession>Q1H4N2</accession>
<organism>
    <name type="scientific">Methylobacillus flagellatus (strain ATCC 51484 / DSM 6875 / VKM B-1610 / KT)</name>
    <dbReference type="NCBI Taxonomy" id="265072"/>
    <lineage>
        <taxon>Bacteria</taxon>
        <taxon>Pseudomonadati</taxon>
        <taxon>Pseudomonadota</taxon>
        <taxon>Betaproteobacteria</taxon>
        <taxon>Nitrosomonadales</taxon>
        <taxon>Methylophilaceae</taxon>
        <taxon>Methylobacillus</taxon>
    </lineage>
</organism>
<keyword id="KW-1185">Reference proteome</keyword>
<keyword id="KW-0687">Ribonucleoprotein</keyword>
<keyword id="KW-0689">Ribosomal protein</keyword>
<keyword id="KW-0694">RNA-binding</keyword>
<keyword id="KW-0699">rRNA-binding</keyword>